<name>YHEU_SALG2</name>
<comment type="similarity">
    <text evidence="1">Belongs to the UPF0270 family.</text>
</comment>
<sequence>MIIPWQGLAPDTLDNLIESFVLREGTDYGEHERSLEQKVADVKLQLQSGEAVLVWSELHETVNIMPKKQFRE</sequence>
<dbReference type="EMBL" id="AM933173">
    <property type="protein sequence ID" value="CAR39747.1"/>
    <property type="molecule type" value="Genomic_DNA"/>
</dbReference>
<dbReference type="RefSeq" id="WP_000586567.1">
    <property type="nucleotide sequence ID" value="NC_011274.1"/>
</dbReference>
<dbReference type="SMR" id="B5RGZ3"/>
<dbReference type="KEGG" id="seg:SG3976"/>
<dbReference type="HOGENOM" id="CLU_186759_1_0_6"/>
<dbReference type="Proteomes" id="UP000008321">
    <property type="component" value="Chromosome"/>
</dbReference>
<dbReference type="Gene3D" id="1.10.10.610">
    <property type="entry name" value="YehU-like"/>
    <property type="match status" value="1"/>
</dbReference>
<dbReference type="HAMAP" id="MF_00690">
    <property type="entry name" value="UPF0270"/>
    <property type="match status" value="1"/>
</dbReference>
<dbReference type="InterPro" id="IPR010648">
    <property type="entry name" value="UPF0270"/>
</dbReference>
<dbReference type="InterPro" id="IPR036685">
    <property type="entry name" value="YehU-like_sf"/>
</dbReference>
<dbReference type="NCBIfam" id="NF003438">
    <property type="entry name" value="PRK04966.1"/>
    <property type="match status" value="1"/>
</dbReference>
<dbReference type="Pfam" id="PF06794">
    <property type="entry name" value="UPF0270"/>
    <property type="match status" value="1"/>
</dbReference>
<dbReference type="PIRSF" id="PIRSF006169">
    <property type="entry name" value="UCP006169"/>
    <property type="match status" value="1"/>
</dbReference>
<dbReference type="SUPFAM" id="SSF118001">
    <property type="entry name" value="YehU-like"/>
    <property type="match status" value="1"/>
</dbReference>
<feature type="chain" id="PRO_1000132022" description="UPF0270 protein YheU">
    <location>
        <begin position="1"/>
        <end position="72"/>
    </location>
</feature>
<evidence type="ECO:0000255" key="1">
    <source>
        <dbReference type="HAMAP-Rule" id="MF_00690"/>
    </source>
</evidence>
<reference key="1">
    <citation type="journal article" date="2008" name="Genome Res.">
        <title>Comparative genome analysis of Salmonella enteritidis PT4 and Salmonella gallinarum 287/91 provides insights into evolutionary and host adaptation pathways.</title>
        <authorList>
            <person name="Thomson N.R."/>
            <person name="Clayton D.J."/>
            <person name="Windhorst D."/>
            <person name="Vernikos G."/>
            <person name="Davidson S."/>
            <person name="Churcher C."/>
            <person name="Quail M.A."/>
            <person name="Stevens M."/>
            <person name="Jones M.A."/>
            <person name="Watson M."/>
            <person name="Barron A."/>
            <person name="Layton A."/>
            <person name="Pickard D."/>
            <person name="Kingsley R.A."/>
            <person name="Bignell A."/>
            <person name="Clark L."/>
            <person name="Harris B."/>
            <person name="Ormond D."/>
            <person name="Abdellah Z."/>
            <person name="Brooks K."/>
            <person name="Cherevach I."/>
            <person name="Chillingworth T."/>
            <person name="Woodward J."/>
            <person name="Norberczak H."/>
            <person name="Lord A."/>
            <person name="Arrowsmith C."/>
            <person name="Jagels K."/>
            <person name="Moule S."/>
            <person name="Mungall K."/>
            <person name="Saunders M."/>
            <person name="Whitehead S."/>
            <person name="Chabalgoity J.A."/>
            <person name="Maskell D."/>
            <person name="Humphreys T."/>
            <person name="Roberts M."/>
            <person name="Barrow P.A."/>
            <person name="Dougan G."/>
            <person name="Parkhill J."/>
        </authorList>
    </citation>
    <scope>NUCLEOTIDE SEQUENCE [LARGE SCALE GENOMIC DNA]</scope>
    <source>
        <strain>287/91 / NCTC 13346</strain>
    </source>
</reference>
<gene>
    <name evidence="1" type="primary">yheU</name>
    <name type="ordered locus">SG3976</name>
</gene>
<accession>B5RGZ3</accession>
<protein>
    <recommendedName>
        <fullName evidence="1">UPF0270 protein YheU</fullName>
    </recommendedName>
</protein>
<organism>
    <name type="scientific">Salmonella gallinarum (strain 287/91 / NCTC 13346)</name>
    <dbReference type="NCBI Taxonomy" id="550538"/>
    <lineage>
        <taxon>Bacteria</taxon>
        <taxon>Pseudomonadati</taxon>
        <taxon>Pseudomonadota</taxon>
        <taxon>Gammaproteobacteria</taxon>
        <taxon>Enterobacterales</taxon>
        <taxon>Enterobacteriaceae</taxon>
        <taxon>Salmonella</taxon>
    </lineage>
</organism>
<proteinExistence type="inferred from homology"/>